<sequence>MQSYIAVNIDMASLKMLICVCVAILIPSTLSQDSHGIAGIIDPRDTASMDVGKISFSEAIGSGAPKEPQIRNRIFACSSPTGASVARLAQPRHCHRHADSTNMTEGIAVVFKQNIAPYVFNVTLYYKHITTVTTWALFSRPQITNEYVTRVPIDYHEIVRIDRSGECSSKATYHKNFMFFEAYDNDEAEKKLPLVPSLLRSTVSKAFHTTNFTKRHQTLGYRTSTSVDCVVEYLQARSVYPYDYFGMATGDTVEISPFYTKNTTGPRRHSVYRDYRFLEIANYQVRDLETGQIRPPKKRNFLTDEQFTIGWDAMEEKESVCTLSKWIEVPEAVRVSYKNSYHFSLKDMTMTFSSGKQPFNISRLHLAECVPTIASEAIDGIFARKYSSTHVRSGDIEYYLGSGGFLIAFQKLMSHGLAEMYLEEAQRQNHLPRGRERRQAAGRRTASLQSGPQGDRITTHSSATFAMLQFAYDKIQAHVNELIGNLLEAWCELQNRQLIVWHEMKKLNPNSLMTSLFGQPVSARLLGDIVAVSKCIEIPIENIRMQDSMRMPGDPTMCYTRPVLIFRYSSSPESQFSANSTENHNLDILGQLGEHNEILQGRNLIEPCMINHRRYFLLGENYLLYEDYTFVRQVNASEIEEVSIFINLNATILEDLDFVPVEVYTREELRDTGTLNYDDVVRYQNIYNKRFRDIDTVIRGDRGDAIFRAIADFFGNTLGEVGKALGTVVMTAAAAVISTVSGIASFLSNPFAALGIGIAVVVSIILGLLAFKYVMNLKSNPVQVLFPGAVPPAGTPPRPSRRYYKDEEEVEEDSDEDDRILATRVLKGLELLHKDEQKARRQKARFSAFAKNMRNLFRRKPRTKEDDYPLLEYPSWAEESEDE</sequence>
<protein>
    <recommendedName>
        <fullName evidence="2">Envelope glycoprotein B</fullName>
        <shortName evidence="2">gB</shortName>
    </recommendedName>
</protein>
<dbReference type="EMBL" id="D00818">
    <property type="protein sequence ID" value="BAA00699.1"/>
    <property type="molecule type" value="Genomic_DNA"/>
</dbReference>
<dbReference type="PIR" id="A38478">
    <property type="entry name" value="VGBEIL"/>
</dbReference>
<dbReference type="SMR" id="P24904"/>
<dbReference type="GlyCosmos" id="P24904">
    <property type="glycosylation" value="8 sites, No reported glycans"/>
</dbReference>
<dbReference type="GO" id="GO:0044175">
    <property type="term" value="C:host cell endosome membrane"/>
    <property type="evidence" value="ECO:0007669"/>
    <property type="project" value="UniProtKB-SubCell"/>
</dbReference>
<dbReference type="GO" id="GO:0044178">
    <property type="term" value="C:host cell Golgi membrane"/>
    <property type="evidence" value="ECO:0007669"/>
    <property type="project" value="UniProtKB-SubCell"/>
</dbReference>
<dbReference type="GO" id="GO:0020002">
    <property type="term" value="C:host cell plasma membrane"/>
    <property type="evidence" value="ECO:0007669"/>
    <property type="project" value="UniProtKB-SubCell"/>
</dbReference>
<dbReference type="GO" id="GO:0016020">
    <property type="term" value="C:membrane"/>
    <property type="evidence" value="ECO:0007669"/>
    <property type="project" value="UniProtKB-KW"/>
</dbReference>
<dbReference type="GO" id="GO:0019031">
    <property type="term" value="C:viral envelope"/>
    <property type="evidence" value="ECO:0007669"/>
    <property type="project" value="UniProtKB-KW"/>
</dbReference>
<dbReference type="GO" id="GO:0055036">
    <property type="term" value="C:virion membrane"/>
    <property type="evidence" value="ECO:0007669"/>
    <property type="project" value="UniProtKB-SubCell"/>
</dbReference>
<dbReference type="GO" id="GO:0046718">
    <property type="term" value="P:symbiont entry into host cell"/>
    <property type="evidence" value="ECO:0007669"/>
    <property type="project" value="UniProtKB-KW"/>
</dbReference>
<dbReference type="GO" id="GO:0019062">
    <property type="term" value="P:virion attachment to host cell"/>
    <property type="evidence" value="ECO:0007669"/>
    <property type="project" value="UniProtKB-KW"/>
</dbReference>
<dbReference type="Gene3D" id="1.20.5.1890">
    <property type="match status" value="1"/>
</dbReference>
<dbReference type="Gene3D" id="2.30.29.100">
    <property type="match status" value="1"/>
</dbReference>
<dbReference type="Gene3D" id="2.30.30.1230">
    <property type="match status" value="1"/>
</dbReference>
<dbReference type="Gene3D" id="6.10.250.3280">
    <property type="match status" value="1"/>
</dbReference>
<dbReference type="HAMAP" id="MF_04032">
    <property type="entry name" value="HSV_GB"/>
    <property type="match status" value="1"/>
</dbReference>
<dbReference type="InterPro" id="IPR035377">
    <property type="entry name" value="Glycoprot_B_PH1"/>
</dbReference>
<dbReference type="InterPro" id="IPR035381">
    <property type="entry name" value="Glycoprot_B_PH2"/>
</dbReference>
<dbReference type="InterPro" id="IPR038631">
    <property type="entry name" value="Glycoprot_B_PH2_sf"/>
</dbReference>
<dbReference type="InterPro" id="IPR055341">
    <property type="entry name" value="Glycoprotein_B_ecto_C"/>
</dbReference>
<dbReference type="InterPro" id="IPR000234">
    <property type="entry name" value="Herpes_Glycoprot_B"/>
</dbReference>
<dbReference type="Pfam" id="PF17416">
    <property type="entry name" value="Glycoprot_B_PH1"/>
    <property type="match status" value="1"/>
</dbReference>
<dbReference type="Pfam" id="PF17417">
    <property type="entry name" value="Glycoprot_B_PH2"/>
    <property type="match status" value="1"/>
</dbReference>
<dbReference type="Pfam" id="PF00606">
    <property type="entry name" value="Glycoprotein_B"/>
    <property type="match status" value="1"/>
</dbReference>
<dbReference type="SUPFAM" id="SSF161008">
    <property type="entry name" value="Viral glycoprotein ectodomain-like"/>
    <property type="match status" value="1"/>
</dbReference>
<evidence type="ECO:0000255" key="1"/>
<evidence type="ECO:0000255" key="2">
    <source>
        <dbReference type="HAMAP-Rule" id="MF_04032"/>
    </source>
</evidence>
<evidence type="ECO:0000256" key="3">
    <source>
        <dbReference type="SAM" id="MobiDB-lite"/>
    </source>
</evidence>
<evidence type="ECO:0000305" key="4"/>
<accession>P24904</accession>
<gene>
    <name evidence="2" type="primary">gB</name>
</gene>
<comment type="function">
    <text evidence="2">Envelope glycoprotein that forms spikes at the surface of virion envelope. Essential for the initial attachment to heparan sulfate moieties of the host cell surface proteoglycans. Involved in fusion of viral and cellular membranes leading to virus entry into the host cell. Following initial binding to its host receptors, membrane fusion is mediated by the fusion machinery composed at least of gB and the heterodimer gH/gL. May be involved in the fusion between the virion envelope and the outer nuclear membrane during virion egress.</text>
</comment>
<comment type="subunit">
    <text evidence="2">Homotrimer; disulfide-linked. Binds to heparan sulfate proteoglycans. Interacts with gH/gL heterodimer.</text>
</comment>
<comment type="subcellular location">
    <subcellularLocation>
        <location evidence="2">Virion membrane</location>
        <topology evidence="2">Single-pass type I membrane protein</topology>
    </subcellularLocation>
    <subcellularLocation>
        <location evidence="2">Host cell membrane</location>
        <topology evidence="2">Single-pass type I membrane protein</topology>
    </subcellularLocation>
    <subcellularLocation>
        <location evidence="2">Host endosome membrane</location>
        <topology evidence="2">Single-pass type I membrane protein</topology>
    </subcellularLocation>
    <subcellularLocation>
        <location evidence="2">Host Golgi apparatus membrane</location>
        <topology evidence="2">Single-pass type I membrane protein</topology>
    </subcellularLocation>
    <text evidence="2">During virion morphogenesis, this protein probably accumulates in the endosomes and trans-Golgi where secondary envelopment occurs. It is probably transported to the cell surface from where it is endocytosed and directed to the trans-Golgi network (TGN).</text>
</comment>
<comment type="PTM">
    <text evidence="4">A proteolytic cleavage by host furin generates two subunits that remain linked by disulfide bonds.</text>
</comment>
<comment type="similarity">
    <text evidence="2">Belongs to the herpesviridae glycoprotein B family.</text>
</comment>
<name>GB_ILTVT</name>
<organismHost>
    <name type="scientific">Gallus gallus</name>
    <name type="common">Chicken</name>
    <dbReference type="NCBI Taxonomy" id="9031"/>
</organismHost>
<reference key="1">
    <citation type="journal article" date="1991" name="J. Gen. Virol.">
        <title>The nucleotide sequence of the glycoprotein gB gene of infectious laryngotracheitis virus: analysis and evolutionary relationship to the homologous gene from other herpesviruses.</title>
        <authorList>
            <person name="Griffin A.M."/>
        </authorList>
    </citation>
    <scope>NUCLEOTIDE SEQUENCE [GENOMIC DNA]</scope>
</reference>
<proteinExistence type="inferred from homology"/>
<keyword id="KW-1015">Disulfide bond</keyword>
<keyword id="KW-0325">Glycoprotein</keyword>
<keyword id="KW-1032">Host cell membrane</keyword>
<keyword id="KW-1039">Host endosome</keyword>
<keyword id="KW-1040">Host Golgi apparatus</keyword>
<keyword id="KW-1043">Host membrane</keyword>
<keyword id="KW-0945">Host-virus interaction</keyword>
<keyword id="KW-0472">Membrane</keyword>
<keyword id="KW-0732">Signal</keyword>
<keyword id="KW-0812">Transmembrane</keyword>
<keyword id="KW-1133">Transmembrane helix</keyword>
<keyword id="KW-1161">Viral attachment to host cell</keyword>
<keyword id="KW-0261">Viral envelope protein</keyword>
<keyword id="KW-0946">Virion</keyword>
<keyword id="KW-1160">Virus entry into host cell</keyword>
<organism>
    <name type="scientific">Infectious laryngotracheitis virus (strain Thorne V882)</name>
    <name type="common">ILTV</name>
    <name type="synonym">Gallid herpesvirus 1</name>
    <dbReference type="NCBI Taxonomy" id="10344"/>
    <lineage>
        <taxon>Viruses</taxon>
        <taxon>Duplodnaviria</taxon>
        <taxon>Heunggongvirae</taxon>
        <taxon>Peploviricota</taxon>
        <taxon>Herviviricetes</taxon>
        <taxon>Herpesvirales</taxon>
        <taxon>Orthoherpesviridae</taxon>
        <taxon>Alphaherpesvirinae</taxon>
        <taxon>Iltovirus</taxon>
        <taxon>Iltovirus gallidalpha1</taxon>
        <taxon>Infectious laryngotracheitis virus</taxon>
    </lineage>
</organism>
<feature type="signal peptide" evidence="2">
    <location>
        <begin position="1"/>
        <end position="31"/>
    </location>
</feature>
<feature type="chain" id="PRO_0000038179" description="Envelope glycoprotein B" evidence="2">
    <location>
        <begin position="32"/>
        <end position="883"/>
    </location>
</feature>
<feature type="topological domain" description="Virion surface" evidence="2">
    <location>
        <begin position="32"/>
        <end position="750"/>
    </location>
</feature>
<feature type="transmembrane region" description="Helical" evidence="2">
    <location>
        <begin position="751"/>
        <end position="771"/>
    </location>
</feature>
<feature type="topological domain" description="Intravirion" evidence="2">
    <location>
        <begin position="772"/>
        <end position="883"/>
    </location>
</feature>
<feature type="region of interest" description="Involved in fusion and/or binding to host membrane" evidence="2">
    <location>
        <begin position="134"/>
        <end position="140"/>
    </location>
</feature>
<feature type="region of interest" description="Involved in fusion and/or binding to host membrane" evidence="2">
    <location>
        <begin position="216"/>
        <end position="223"/>
    </location>
</feature>
<feature type="region of interest" description="Disordered" evidence="3">
    <location>
        <begin position="428"/>
        <end position="457"/>
    </location>
</feature>
<feature type="region of interest" description="Hydrophobic membrane proximal region" evidence="2">
    <location>
        <begin position="694"/>
        <end position="748"/>
    </location>
</feature>
<feature type="region of interest" description="Hydrophobic membrane proximal region">
    <location>
        <begin position="724"/>
        <end position="744"/>
    </location>
</feature>
<feature type="region of interest" description="Disordered" evidence="3">
    <location>
        <begin position="791"/>
        <end position="817"/>
    </location>
</feature>
<feature type="short sequence motif" description="Internalization motif" evidence="2">
    <location>
        <begin position="868"/>
        <end position="871"/>
    </location>
</feature>
<feature type="compositionally biased region" description="Acidic residues" evidence="3">
    <location>
        <begin position="806"/>
        <end position="817"/>
    </location>
</feature>
<feature type="site" description="Cleavage; by host furin" evidence="1">
    <location>
        <begin position="438"/>
        <end position="439"/>
    </location>
</feature>
<feature type="glycosylation site" description="N-linked (GlcNAc...) asparagine; by host" evidence="2">
    <location>
        <position position="102"/>
    </location>
</feature>
<feature type="glycosylation site" description="N-linked (GlcNAc...) asparagine; by host" evidence="2">
    <location>
        <position position="121"/>
    </location>
</feature>
<feature type="glycosylation site" description="N-linked (GlcNAc...) asparagine; by host" evidence="2">
    <location>
        <position position="211"/>
    </location>
</feature>
<feature type="glycosylation site" description="N-linked (GlcNAc...) asparagine; by host" evidence="2">
    <location>
        <position position="262"/>
    </location>
</feature>
<feature type="glycosylation site" description="N-linked (GlcNAc...) asparagine; by host" evidence="2">
    <location>
        <position position="360"/>
    </location>
</feature>
<feature type="glycosylation site" description="N-linked (GlcNAc...) asparagine; by host" evidence="2">
    <location>
        <position position="579"/>
    </location>
</feature>
<feature type="glycosylation site" description="N-linked (GlcNAc...) asparagine; by host" evidence="2">
    <location>
        <position position="635"/>
    </location>
</feature>
<feature type="glycosylation site" description="N-linked (GlcNAc...) asparagine; by host" evidence="2">
    <location>
        <position position="649"/>
    </location>
</feature>
<feature type="disulfide bond" evidence="2">
    <location>
        <begin position="77"/>
        <end position="535"/>
    </location>
</feature>
<feature type="disulfide bond" evidence="2">
    <location>
        <begin position="94"/>
        <end position="491"/>
    </location>
</feature>
<feature type="disulfide bond" evidence="2">
    <location>
        <begin position="167"/>
        <end position="229"/>
    </location>
</feature>
<feature type="disulfide bond" evidence="2">
    <location>
        <begin position="321"/>
        <end position="369"/>
    </location>
</feature>
<feature type="disulfide bond" evidence="2">
    <location>
        <begin position="558"/>
        <end position="608"/>
    </location>
</feature>